<evidence type="ECO:0000255" key="1">
    <source>
        <dbReference type="HAMAP-Rule" id="MF_01218"/>
    </source>
</evidence>
<dbReference type="EC" id="2.4.2.9" evidence="1"/>
<dbReference type="EMBL" id="CP000259">
    <property type="protein sequence ID" value="ABF31514.1"/>
    <property type="molecule type" value="Genomic_DNA"/>
</dbReference>
<dbReference type="RefSeq" id="WP_002985854.1">
    <property type="nucleotide sequence ID" value="NC_008021.1"/>
</dbReference>
<dbReference type="SMR" id="Q1JN85"/>
<dbReference type="GeneID" id="69901341"/>
<dbReference type="KEGG" id="spk:MGAS9429_Spy0326"/>
<dbReference type="HOGENOM" id="CLU_067096_2_2_9"/>
<dbReference type="UniPathway" id="UPA00574">
    <property type="reaction ID" value="UER00636"/>
</dbReference>
<dbReference type="Proteomes" id="UP000002433">
    <property type="component" value="Chromosome"/>
</dbReference>
<dbReference type="GO" id="GO:0005525">
    <property type="term" value="F:GTP binding"/>
    <property type="evidence" value="ECO:0007669"/>
    <property type="project" value="UniProtKB-KW"/>
</dbReference>
<dbReference type="GO" id="GO:0000287">
    <property type="term" value="F:magnesium ion binding"/>
    <property type="evidence" value="ECO:0007669"/>
    <property type="project" value="UniProtKB-UniRule"/>
</dbReference>
<dbReference type="GO" id="GO:0004845">
    <property type="term" value="F:uracil phosphoribosyltransferase activity"/>
    <property type="evidence" value="ECO:0007669"/>
    <property type="project" value="UniProtKB-UniRule"/>
</dbReference>
<dbReference type="GO" id="GO:0044206">
    <property type="term" value="P:UMP salvage"/>
    <property type="evidence" value="ECO:0007669"/>
    <property type="project" value="UniProtKB-UniRule"/>
</dbReference>
<dbReference type="GO" id="GO:0006223">
    <property type="term" value="P:uracil salvage"/>
    <property type="evidence" value="ECO:0007669"/>
    <property type="project" value="InterPro"/>
</dbReference>
<dbReference type="CDD" id="cd06223">
    <property type="entry name" value="PRTases_typeI"/>
    <property type="match status" value="1"/>
</dbReference>
<dbReference type="FunFam" id="3.40.50.2020:FF:000003">
    <property type="entry name" value="Uracil phosphoribosyltransferase"/>
    <property type="match status" value="1"/>
</dbReference>
<dbReference type="Gene3D" id="3.40.50.2020">
    <property type="match status" value="1"/>
</dbReference>
<dbReference type="HAMAP" id="MF_01218_B">
    <property type="entry name" value="Upp_B"/>
    <property type="match status" value="1"/>
</dbReference>
<dbReference type="InterPro" id="IPR000836">
    <property type="entry name" value="PRibTrfase_dom"/>
</dbReference>
<dbReference type="InterPro" id="IPR029057">
    <property type="entry name" value="PRTase-like"/>
</dbReference>
<dbReference type="InterPro" id="IPR034332">
    <property type="entry name" value="Upp_B"/>
</dbReference>
<dbReference type="InterPro" id="IPR050054">
    <property type="entry name" value="UPRTase/APRTase"/>
</dbReference>
<dbReference type="InterPro" id="IPR005765">
    <property type="entry name" value="Ura_phspho_trans"/>
</dbReference>
<dbReference type="NCBIfam" id="NF001097">
    <property type="entry name" value="PRK00129.1"/>
    <property type="match status" value="1"/>
</dbReference>
<dbReference type="NCBIfam" id="TIGR01091">
    <property type="entry name" value="upp"/>
    <property type="match status" value="1"/>
</dbReference>
<dbReference type="PANTHER" id="PTHR32315">
    <property type="entry name" value="ADENINE PHOSPHORIBOSYLTRANSFERASE"/>
    <property type="match status" value="1"/>
</dbReference>
<dbReference type="PANTHER" id="PTHR32315:SF4">
    <property type="entry name" value="URACIL PHOSPHORIBOSYLTRANSFERASE, CHLOROPLASTIC"/>
    <property type="match status" value="1"/>
</dbReference>
<dbReference type="Pfam" id="PF14681">
    <property type="entry name" value="UPRTase"/>
    <property type="match status" value="1"/>
</dbReference>
<dbReference type="SUPFAM" id="SSF53271">
    <property type="entry name" value="PRTase-like"/>
    <property type="match status" value="1"/>
</dbReference>
<name>UPP_STRPC</name>
<feature type="chain" id="PRO_1000053795" description="Uracil phosphoribosyltransferase">
    <location>
        <begin position="1"/>
        <end position="209"/>
    </location>
</feature>
<feature type="binding site" evidence="1">
    <location>
        <position position="79"/>
    </location>
    <ligand>
        <name>5-phospho-alpha-D-ribose 1-diphosphate</name>
        <dbReference type="ChEBI" id="CHEBI:58017"/>
    </ligand>
</feature>
<feature type="binding site" evidence="1">
    <location>
        <position position="104"/>
    </location>
    <ligand>
        <name>5-phospho-alpha-D-ribose 1-diphosphate</name>
        <dbReference type="ChEBI" id="CHEBI:58017"/>
    </ligand>
</feature>
<feature type="binding site" evidence="1">
    <location>
        <begin position="131"/>
        <end position="139"/>
    </location>
    <ligand>
        <name>5-phospho-alpha-D-ribose 1-diphosphate</name>
        <dbReference type="ChEBI" id="CHEBI:58017"/>
    </ligand>
</feature>
<feature type="binding site" evidence="1">
    <location>
        <position position="194"/>
    </location>
    <ligand>
        <name>uracil</name>
        <dbReference type="ChEBI" id="CHEBI:17568"/>
    </ligand>
</feature>
<feature type="binding site" evidence="1">
    <location>
        <begin position="199"/>
        <end position="201"/>
    </location>
    <ligand>
        <name>uracil</name>
        <dbReference type="ChEBI" id="CHEBI:17568"/>
    </ligand>
</feature>
<feature type="binding site" evidence="1">
    <location>
        <position position="200"/>
    </location>
    <ligand>
        <name>5-phospho-alpha-D-ribose 1-diphosphate</name>
        <dbReference type="ChEBI" id="CHEBI:58017"/>
    </ligand>
</feature>
<organism>
    <name type="scientific">Streptococcus pyogenes serotype M12 (strain MGAS9429)</name>
    <dbReference type="NCBI Taxonomy" id="370551"/>
    <lineage>
        <taxon>Bacteria</taxon>
        <taxon>Bacillati</taxon>
        <taxon>Bacillota</taxon>
        <taxon>Bacilli</taxon>
        <taxon>Lactobacillales</taxon>
        <taxon>Streptococcaceae</taxon>
        <taxon>Streptococcus</taxon>
    </lineage>
</organism>
<proteinExistence type="inferred from homology"/>
<protein>
    <recommendedName>
        <fullName evidence="1">Uracil phosphoribosyltransferase</fullName>
        <ecNumber evidence="1">2.4.2.9</ecNumber>
    </recommendedName>
    <alternativeName>
        <fullName evidence="1">UMP pyrophosphorylase</fullName>
    </alternativeName>
    <alternativeName>
        <fullName evidence="1">UPRTase</fullName>
    </alternativeName>
</protein>
<sequence length="209" mass="22826">MGKCQVISHPLIQHKLSILRRQTTSTKDFRELVNEIAMLMGYEVSRDLPLEDVDIQTPVSKTVQKQLAGKKLAIVPILRAGIGMVDGLLSLVPAAKVGHIGMYRNEETLEPVEYLVKLPEDINQRQIFLVDPMLATGGSAILAVDSLKKRGAANIKFVCLVAAPEGVKKLQEAHPDIDIFTAALDDHLNEHGYIVPGLGDAGDRLFGTK</sequence>
<keyword id="KW-0021">Allosteric enzyme</keyword>
<keyword id="KW-0328">Glycosyltransferase</keyword>
<keyword id="KW-0342">GTP-binding</keyword>
<keyword id="KW-0460">Magnesium</keyword>
<keyword id="KW-0547">Nucleotide-binding</keyword>
<keyword id="KW-0808">Transferase</keyword>
<accession>Q1JN85</accession>
<gene>
    <name evidence="1" type="primary">upp</name>
    <name type="ordered locus">MGAS9429_Spy0326</name>
</gene>
<comment type="function">
    <text evidence="1">Catalyzes the conversion of uracil and 5-phospho-alpha-D-ribose 1-diphosphate (PRPP) to UMP and diphosphate.</text>
</comment>
<comment type="catalytic activity">
    <reaction evidence="1">
        <text>UMP + diphosphate = 5-phospho-alpha-D-ribose 1-diphosphate + uracil</text>
        <dbReference type="Rhea" id="RHEA:13017"/>
        <dbReference type="ChEBI" id="CHEBI:17568"/>
        <dbReference type="ChEBI" id="CHEBI:33019"/>
        <dbReference type="ChEBI" id="CHEBI:57865"/>
        <dbReference type="ChEBI" id="CHEBI:58017"/>
        <dbReference type="EC" id="2.4.2.9"/>
    </reaction>
</comment>
<comment type="cofactor">
    <cofactor evidence="1">
        <name>Mg(2+)</name>
        <dbReference type="ChEBI" id="CHEBI:18420"/>
    </cofactor>
    <text evidence="1">Binds 1 Mg(2+) ion per subunit. The magnesium is bound as Mg-PRPP.</text>
</comment>
<comment type="activity regulation">
    <text evidence="1">Allosterically activated by GTP.</text>
</comment>
<comment type="pathway">
    <text evidence="1">Pyrimidine metabolism; UMP biosynthesis via salvage pathway; UMP from uracil: step 1/1.</text>
</comment>
<comment type="similarity">
    <text evidence="1">Belongs to the UPRTase family.</text>
</comment>
<reference key="1">
    <citation type="journal article" date="2006" name="Proc. Natl. Acad. Sci. U.S.A.">
        <title>Molecular genetic anatomy of inter- and intraserotype variation in the human bacterial pathogen group A Streptococcus.</title>
        <authorList>
            <person name="Beres S.B."/>
            <person name="Richter E.W."/>
            <person name="Nagiec M.J."/>
            <person name="Sumby P."/>
            <person name="Porcella S.F."/>
            <person name="DeLeo F.R."/>
            <person name="Musser J.M."/>
        </authorList>
    </citation>
    <scope>NUCLEOTIDE SEQUENCE [LARGE SCALE GENOMIC DNA]</scope>
    <source>
        <strain>MGAS9429</strain>
    </source>
</reference>